<protein>
    <recommendedName>
        <fullName evidence="1">Eukaryotic translation initiation factor 3 subunit G</fullName>
        <shortName evidence="1">eIF3g</shortName>
    </recommendedName>
    <alternativeName>
        <fullName evidence="1">Eukaryotic translation initiation factor 3 RNA-binding subunit</fullName>
        <shortName evidence="1">eIF-3 RNA-binding subunit</shortName>
    </alternativeName>
    <alternativeName>
        <fullName evidence="1">Translation initiation factor eIF3 p33 subunit homolog</fullName>
        <shortName evidence="1">eIF3 p33 homolog</shortName>
    </alternativeName>
</protein>
<organism>
    <name type="scientific">Botryotinia fuckeliana (strain B05.10)</name>
    <name type="common">Noble rot fungus</name>
    <name type="synonym">Botrytis cinerea</name>
    <dbReference type="NCBI Taxonomy" id="332648"/>
    <lineage>
        <taxon>Eukaryota</taxon>
        <taxon>Fungi</taxon>
        <taxon>Dikarya</taxon>
        <taxon>Ascomycota</taxon>
        <taxon>Pezizomycotina</taxon>
        <taxon>Leotiomycetes</taxon>
        <taxon>Helotiales</taxon>
        <taxon>Sclerotiniaceae</taxon>
        <taxon>Botrytis</taxon>
    </lineage>
</organism>
<comment type="function">
    <text evidence="1">RNA-binding component of the eukaryotic translation initiation factor 3 (eIF-3) complex, which is involved in protein synthesis of a specialized repertoire of mRNAs and, together with other initiation factors, stimulates binding of mRNA and methionyl-tRNAi to the 40S ribosome. The eIF-3 complex specifically targets and initiates translation of a subset of mRNAs involved in cell proliferation. This subunit can bind 18S rRNA.</text>
</comment>
<comment type="subunit">
    <text evidence="1">Component of the eukaryotic translation initiation factor 3 (eIF-3) complex.</text>
</comment>
<comment type="subcellular location">
    <subcellularLocation>
        <location evidence="1">Cytoplasm</location>
    </subcellularLocation>
</comment>
<comment type="similarity">
    <text evidence="1">Belongs to the eIF-3 subunit G family.</text>
</comment>
<dbReference type="EMBL" id="CP009811">
    <property type="protein sequence ID" value="ATZ52120.1"/>
    <property type="molecule type" value="Genomic_DNA"/>
</dbReference>
<dbReference type="SMR" id="A6SGN8"/>
<dbReference type="EnsemblFungi" id="Bcin07g06230.1">
    <property type="protein sequence ID" value="Bcin07p06230.1"/>
    <property type="gene ID" value="Bcin07g06230"/>
</dbReference>
<dbReference type="GeneID" id="5430122"/>
<dbReference type="KEGG" id="bfu:BCIN_07g06230"/>
<dbReference type="VEuPathDB" id="FungiDB:Bcin07g06230"/>
<dbReference type="OMA" id="ICQGDHF"/>
<dbReference type="OrthoDB" id="639027at2759"/>
<dbReference type="Proteomes" id="UP000001798">
    <property type="component" value="Chromosome bcin07"/>
</dbReference>
<dbReference type="GO" id="GO:0016282">
    <property type="term" value="C:eukaryotic 43S preinitiation complex"/>
    <property type="evidence" value="ECO:0007669"/>
    <property type="project" value="UniProtKB-UniRule"/>
</dbReference>
<dbReference type="GO" id="GO:0033290">
    <property type="term" value="C:eukaryotic 48S preinitiation complex"/>
    <property type="evidence" value="ECO:0007669"/>
    <property type="project" value="UniProtKB-UniRule"/>
</dbReference>
<dbReference type="GO" id="GO:0071540">
    <property type="term" value="C:eukaryotic translation initiation factor 3 complex, eIF3e"/>
    <property type="evidence" value="ECO:0007669"/>
    <property type="project" value="EnsemblFungi"/>
</dbReference>
<dbReference type="GO" id="GO:0071541">
    <property type="term" value="C:eukaryotic translation initiation factor 3 complex, eIF3m"/>
    <property type="evidence" value="ECO:0007669"/>
    <property type="project" value="EnsemblFungi"/>
</dbReference>
<dbReference type="GO" id="GO:0043614">
    <property type="term" value="C:multi-eIF complex"/>
    <property type="evidence" value="ECO:0007669"/>
    <property type="project" value="EnsemblFungi"/>
</dbReference>
<dbReference type="GO" id="GO:0003723">
    <property type="term" value="F:RNA binding"/>
    <property type="evidence" value="ECO:0007669"/>
    <property type="project" value="UniProtKB-UniRule"/>
</dbReference>
<dbReference type="GO" id="GO:0003743">
    <property type="term" value="F:translation initiation factor activity"/>
    <property type="evidence" value="ECO:0007669"/>
    <property type="project" value="UniProtKB-UniRule"/>
</dbReference>
<dbReference type="GO" id="GO:0001732">
    <property type="term" value="P:formation of cytoplasmic translation initiation complex"/>
    <property type="evidence" value="ECO:0007669"/>
    <property type="project" value="UniProtKB-UniRule"/>
</dbReference>
<dbReference type="GO" id="GO:0002188">
    <property type="term" value="P:translation reinitiation"/>
    <property type="evidence" value="ECO:0007669"/>
    <property type="project" value="EnsemblFungi"/>
</dbReference>
<dbReference type="GO" id="GO:0006415">
    <property type="term" value="P:translational termination"/>
    <property type="evidence" value="ECO:0007669"/>
    <property type="project" value="EnsemblFungi"/>
</dbReference>
<dbReference type="CDD" id="cd12933">
    <property type="entry name" value="eIF3G"/>
    <property type="match status" value="1"/>
</dbReference>
<dbReference type="CDD" id="cd12408">
    <property type="entry name" value="RRM_eIF3G_like"/>
    <property type="match status" value="1"/>
</dbReference>
<dbReference type="FunFam" id="3.30.70.330:FF:000328">
    <property type="entry name" value="Eukaryotic translation initiation factor 3 subunit G"/>
    <property type="match status" value="1"/>
</dbReference>
<dbReference type="Gene3D" id="3.30.70.330">
    <property type="match status" value="1"/>
</dbReference>
<dbReference type="HAMAP" id="MF_03006">
    <property type="entry name" value="eIF3g"/>
    <property type="match status" value="1"/>
</dbReference>
<dbReference type="InterPro" id="IPR017334">
    <property type="entry name" value="eIF3_g"/>
</dbReference>
<dbReference type="InterPro" id="IPR024675">
    <property type="entry name" value="eIF3g_N"/>
</dbReference>
<dbReference type="InterPro" id="IPR034240">
    <property type="entry name" value="eIF3G_RRM"/>
</dbReference>
<dbReference type="InterPro" id="IPR012677">
    <property type="entry name" value="Nucleotide-bd_a/b_plait_sf"/>
</dbReference>
<dbReference type="InterPro" id="IPR035979">
    <property type="entry name" value="RBD_domain_sf"/>
</dbReference>
<dbReference type="InterPro" id="IPR000504">
    <property type="entry name" value="RRM_dom"/>
</dbReference>
<dbReference type="PANTHER" id="PTHR10352">
    <property type="entry name" value="EUKARYOTIC TRANSLATION INITIATION FACTOR 3 SUBUNIT G"/>
    <property type="match status" value="1"/>
</dbReference>
<dbReference type="Pfam" id="PF12353">
    <property type="entry name" value="eIF3g"/>
    <property type="match status" value="1"/>
</dbReference>
<dbReference type="Pfam" id="PF00076">
    <property type="entry name" value="RRM_1"/>
    <property type="match status" value="1"/>
</dbReference>
<dbReference type="PIRSF" id="PIRSF037949">
    <property type="entry name" value="Transl_init_eIF-3_RNA-bind"/>
    <property type="match status" value="1"/>
</dbReference>
<dbReference type="SMART" id="SM00360">
    <property type="entry name" value="RRM"/>
    <property type="match status" value="1"/>
</dbReference>
<dbReference type="SUPFAM" id="SSF54928">
    <property type="entry name" value="RNA-binding domain, RBD"/>
    <property type="match status" value="1"/>
</dbReference>
<dbReference type="PROSITE" id="PS50102">
    <property type="entry name" value="RRM"/>
    <property type="match status" value="1"/>
</dbReference>
<name>EIF3G_BOTFB</name>
<evidence type="ECO:0000255" key="1">
    <source>
        <dbReference type="HAMAP-Rule" id="MF_03006"/>
    </source>
</evidence>
<evidence type="ECO:0000256" key="2">
    <source>
        <dbReference type="SAM" id="MobiDB-lite"/>
    </source>
</evidence>
<feature type="chain" id="PRO_0000366891" description="Eukaryotic translation initiation factor 3 subunit G">
    <location>
        <begin position="1"/>
        <end position="288"/>
    </location>
</feature>
<feature type="domain" description="RRM" evidence="1">
    <location>
        <begin position="208"/>
        <end position="286"/>
    </location>
</feature>
<feature type="region of interest" description="Disordered" evidence="2">
    <location>
        <begin position="1"/>
        <end position="35"/>
    </location>
</feature>
<feature type="compositionally biased region" description="Acidic residues" evidence="2">
    <location>
        <begin position="11"/>
        <end position="20"/>
    </location>
</feature>
<feature type="compositionally biased region" description="Polar residues" evidence="2">
    <location>
        <begin position="21"/>
        <end position="35"/>
    </location>
</feature>
<accession>A6SGN8</accession>
<accession>A0A384JNN3</accession>
<reference key="1">
    <citation type="journal article" date="2011" name="PLoS Genet.">
        <title>Genomic analysis of the necrotrophic fungal pathogens Sclerotinia sclerotiorum and Botrytis cinerea.</title>
        <authorList>
            <person name="Amselem J."/>
            <person name="Cuomo C.A."/>
            <person name="van Kan J.A.L."/>
            <person name="Viaud M."/>
            <person name="Benito E.P."/>
            <person name="Couloux A."/>
            <person name="Coutinho P.M."/>
            <person name="de Vries R.P."/>
            <person name="Dyer P.S."/>
            <person name="Fillinger S."/>
            <person name="Fournier E."/>
            <person name="Gout L."/>
            <person name="Hahn M."/>
            <person name="Kohn L."/>
            <person name="Lapalu N."/>
            <person name="Plummer K.M."/>
            <person name="Pradier J.-M."/>
            <person name="Quevillon E."/>
            <person name="Sharon A."/>
            <person name="Simon A."/>
            <person name="ten Have A."/>
            <person name="Tudzynski B."/>
            <person name="Tudzynski P."/>
            <person name="Wincker P."/>
            <person name="Andrew M."/>
            <person name="Anthouard V."/>
            <person name="Beever R.E."/>
            <person name="Beffa R."/>
            <person name="Benoit I."/>
            <person name="Bouzid O."/>
            <person name="Brault B."/>
            <person name="Chen Z."/>
            <person name="Choquer M."/>
            <person name="Collemare J."/>
            <person name="Cotton P."/>
            <person name="Danchin E.G."/>
            <person name="Da Silva C."/>
            <person name="Gautier A."/>
            <person name="Giraud C."/>
            <person name="Giraud T."/>
            <person name="Gonzalez C."/>
            <person name="Grossetete S."/>
            <person name="Gueldener U."/>
            <person name="Henrissat B."/>
            <person name="Howlett B.J."/>
            <person name="Kodira C."/>
            <person name="Kretschmer M."/>
            <person name="Lappartient A."/>
            <person name="Leroch M."/>
            <person name="Levis C."/>
            <person name="Mauceli E."/>
            <person name="Neuveglise C."/>
            <person name="Oeser B."/>
            <person name="Pearson M."/>
            <person name="Poulain J."/>
            <person name="Poussereau N."/>
            <person name="Quesneville H."/>
            <person name="Rascle C."/>
            <person name="Schumacher J."/>
            <person name="Segurens B."/>
            <person name="Sexton A."/>
            <person name="Silva E."/>
            <person name="Sirven C."/>
            <person name="Soanes D.M."/>
            <person name="Talbot N.J."/>
            <person name="Templeton M."/>
            <person name="Yandava C."/>
            <person name="Yarden O."/>
            <person name="Zeng Q."/>
            <person name="Rollins J.A."/>
            <person name="Lebrun M.-H."/>
            <person name="Dickman M."/>
        </authorList>
    </citation>
    <scope>NUCLEOTIDE SEQUENCE [LARGE SCALE GENOMIC DNA]</scope>
    <source>
        <strain>B05.10</strain>
    </source>
</reference>
<reference key="2">
    <citation type="journal article" date="2012" name="Eukaryot. Cell">
        <title>Genome update of Botrytis cinerea strains B05.10 and T4.</title>
        <authorList>
            <person name="Staats M."/>
            <person name="van Kan J.A.L."/>
        </authorList>
    </citation>
    <scope>NUCLEOTIDE SEQUENCE [LARGE SCALE GENOMIC DNA]</scope>
    <scope>GENOME REANNOTATION</scope>
    <source>
        <strain>B05.10</strain>
    </source>
</reference>
<reference key="3">
    <citation type="journal article" date="2017" name="Mol. Plant Pathol.">
        <title>A gapless genome sequence of the fungus Botrytis cinerea.</title>
        <authorList>
            <person name="van Kan J.A.L."/>
            <person name="Stassen J.H.M."/>
            <person name="Mosbach A."/>
            <person name="van der Lee T.A.J."/>
            <person name="Faino L."/>
            <person name="Farmer A.D."/>
            <person name="Papasotiriou D.G."/>
            <person name="Zhou S."/>
            <person name="Seidl M.F."/>
            <person name="Cottam E."/>
            <person name="Edel D."/>
            <person name="Hahn M."/>
            <person name="Schwartz D.C."/>
            <person name="Dietrich R.A."/>
            <person name="Widdison S."/>
            <person name="Scalliet G."/>
        </authorList>
    </citation>
    <scope>NUCLEOTIDE SEQUENCE [LARGE SCALE GENOMIC DNA]</scope>
    <scope>GENOME REANNOTATION</scope>
    <source>
        <strain>B05.10</strain>
    </source>
</reference>
<gene>
    <name type="primary">tif35</name>
    <name type="ORF">BC1G_11662</name>
    <name type="ORF">BCIN_07g06230</name>
</gene>
<proteinExistence type="inferred from homology"/>
<keyword id="KW-0963">Cytoplasm</keyword>
<keyword id="KW-0396">Initiation factor</keyword>
<keyword id="KW-0648">Protein biosynthesis</keyword>
<keyword id="KW-1185">Reference proteome</keyword>
<keyword id="KW-0694">RNA-binding</keyword>
<sequence length="288" mass="31720">MSRVANNRDWADDEDLEDSNELPQSTTTTNKDGTQTIVTWRFNDDGKKVKTTRRIRFTKVKEIVNPRVAERKSWGKFGLSQKDAAGPASDTTSVGENIIFRPSTNWRKDAKEEVSDAGAMKNKLKDKQVKCRICSGEHFTAKCPFKGTMAPLGEEGAVDVAAGHADTPEGPGGLGAGKSSYVPPHLRNGGTAGGERMGGGKFERDDLATLRVTNVSEMAEEQELRDMFERFGRVTRVFLAKDRETGLAKGFAFISFQERSDAAKACEKMDGYGFKHLILRVEFAKKAS</sequence>